<gene>
    <name type="primary">iwi</name>
</gene>
<feature type="chain" id="PRO_0000227972" description="Piwi-like protein">
    <location>
        <begin position="1"/>
        <end position="818"/>
    </location>
</feature>
<feature type="domain" description="PAZ" evidence="1">
    <location>
        <begin position="220"/>
        <end position="339"/>
    </location>
</feature>
<feature type="domain" description="Piwi" evidence="2">
    <location>
        <begin position="501"/>
        <end position="800"/>
    </location>
</feature>
<dbReference type="EMBL" id="AJ865376">
    <property type="protein sequence ID" value="CAI26303.1"/>
    <property type="molecule type" value="Genomic_DNA"/>
</dbReference>
<dbReference type="SMR" id="Q2PC95"/>
<dbReference type="GO" id="GO:0003723">
    <property type="term" value="F:RNA binding"/>
    <property type="evidence" value="ECO:0007669"/>
    <property type="project" value="InterPro"/>
</dbReference>
<dbReference type="GO" id="GO:0031047">
    <property type="term" value="P:regulatory ncRNA-mediated gene silencing"/>
    <property type="evidence" value="ECO:0007669"/>
    <property type="project" value="UniProtKB-KW"/>
</dbReference>
<dbReference type="CDD" id="cd04658">
    <property type="entry name" value="Piwi_piwi-like_Euk"/>
    <property type="match status" value="1"/>
</dbReference>
<dbReference type="Gene3D" id="3.40.50.2300">
    <property type="match status" value="1"/>
</dbReference>
<dbReference type="Gene3D" id="2.170.260.10">
    <property type="entry name" value="paz domain"/>
    <property type="match status" value="1"/>
</dbReference>
<dbReference type="Gene3D" id="3.30.420.10">
    <property type="entry name" value="Ribonuclease H-like superfamily/Ribonuclease H"/>
    <property type="match status" value="1"/>
</dbReference>
<dbReference type="InterPro" id="IPR003100">
    <property type="entry name" value="PAZ_dom"/>
</dbReference>
<dbReference type="InterPro" id="IPR036085">
    <property type="entry name" value="PAZ_dom_sf"/>
</dbReference>
<dbReference type="InterPro" id="IPR003165">
    <property type="entry name" value="Piwi"/>
</dbReference>
<dbReference type="InterPro" id="IPR012337">
    <property type="entry name" value="RNaseH-like_sf"/>
</dbReference>
<dbReference type="InterPro" id="IPR036397">
    <property type="entry name" value="RNaseH_sf"/>
</dbReference>
<dbReference type="PANTHER" id="PTHR22891">
    <property type="entry name" value="EUKARYOTIC TRANSLATION INITIATION FACTOR 2C"/>
    <property type="match status" value="1"/>
</dbReference>
<dbReference type="Pfam" id="PF02170">
    <property type="entry name" value="PAZ"/>
    <property type="match status" value="1"/>
</dbReference>
<dbReference type="Pfam" id="PF02171">
    <property type="entry name" value="Piwi"/>
    <property type="match status" value="1"/>
</dbReference>
<dbReference type="SMART" id="SM00949">
    <property type="entry name" value="PAZ"/>
    <property type="match status" value="1"/>
</dbReference>
<dbReference type="SMART" id="SM00950">
    <property type="entry name" value="Piwi"/>
    <property type="match status" value="1"/>
</dbReference>
<dbReference type="SUPFAM" id="SSF101690">
    <property type="entry name" value="PAZ domain"/>
    <property type="match status" value="1"/>
</dbReference>
<dbReference type="SUPFAM" id="SSF53098">
    <property type="entry name" value="Ribonuclease H-like"/>
    <property type="match status" value="1"/>
</dbReference>
<dbReference type="PROSITE" id="PS50821">
    <property type="entry name" value="PAZ"/>
    <property type="match status" value="1"/>
</dbReference>
<dbReference type="PROSITE" id="PS50822">
    <property type="entry name" value="PIWI"/>
    <property type="match status" value="1"/>
</dbReference>
<reference key="1">
    <citation type="submission" date="2004-11" db="EMBL/GenBank/DDBJ databases">
        <title>Characterization of a Iwi gene in planarians.</title>
        <authorList>
            <person name="Rossi L."/>
            <person name="Salvetti A."/>
            <person name="Batistoni R."/>
            <person name="Deri P."/>
            <person name="Gremigni V."/>
        </authorList>
    </citation>
    <scope>NUCLEOTIDE SEQUENCE [MRNA]</scope>
</reference>
<organism>
    <name type="scientific">Dugesia japonica</name>
    <name type="common">Planarian</name>
    <dbReference type="NCBI Taxonomy" id="6161"/>
    <lineage>
        <taxon>Eukaryota</taxon>
        <taxon>Metazoa</taxon>
        <taxon>Spiralia</taxon>
        <taxon>Lophotrochozoa</taxon>
        <taxon>Platyhelminthes</taxon>
        <taxon>Rhabditophora</taxon>
        <taxon>Seriata</taxon>
        <taxon>Tricladida</taxon>
        <taxon>Continenticola</taxon>
        <taxon>Geoplanoidea</taxon>
        <taxon>Dugesiidae</taxon>
        <taxon>Dugesia</taxon>
    </lineage>
</organism>
<sequence>MEIELIRKNLDGIRIERRGGLQKRFRIVEPDLQPNETKDKIGNVGKVVRLQSNFTKFSVNKSEKYIMYDTTFSKMGLSPKLKLQILVRICKEYNLPGSFCYDGRRLFTSDNWTEGSDIKEFTIDEKKVSLRLVSTFLSDTEEYYQMINVLLNNLQIIMGQEKIGKGYFLGSNSNKDNVVKNIGPTFFETNNFKVLGGFGTTLQRGTRPNGQLTTLLYIERINRVLNDNSVLVTYNRKNIDQLIGRDILTKYNNKTYRISEIKEMNINETFEMVGRTLSYAQYFKERYNINLTTEQQPFVLTRVKKIARRDKRKEHNENEAPEDMDLTLNITGELCFLCGFSDQEKSNIDLQKNLGCVLKRGPRERLDDIPSFCDWIKTNNNSQGMSNKWGLKIDNTPLEIEGRELPHCDVISGGQRINEKIKDDWKFGKVQFNVQKGVKHEIDVVIVDRNDSQYGNFLNDVEYEIKQLRFDAKIGRVLVCSANDVERSLNDVMRSGSGCAKIALVFVPDDRVYAKVKSFTISTGLLTQCVTTRNGTNRNDKRRQVVSSKTVMQIFSKFGYDPWTIDIKMRPTMIVGMDTFHNKGSKKSIHASVFSINSTFSQYMSFANSPKGKQEFHDTLSGNFKAALTEFKRIYKILPVRIMVYRDGVGDSQLQFTKQFEVDAMKPLVENIYKENGCQVPQIIYVIVKKRIGTKLFNRGDNANPGTIVDKEIVKPNFFEFFLVSQRVTRGTASPTNYNVLEDTRYQNKAGIIEAITPNELQRITYTLTHLYFNWMGTIRVPVPVHYAHKLAELIGKVHKGSTPALINERIRNRLFYL</sequence>
<keyword id="KW-0943">RNA-mediated gene silencing</keyword>
<evidence type="ECO:0000255" key="1">
    <source>
        <dbReference type="PROSITE-ProRule" id="PRU00142"/>
    </source>
</evidence>
<evidence type="ECO:0000255" key="2">
    <source>
        <dbReference type="PROSITE-ProRule" id="PRU00150"/>
    </source>
</evidence>
<evidence type="ECO:0000305" key="3"/>
<proteinExistence type="evidence at transcript level"/>
<protein>
    <recommendedName>
        <fullName>Piwi-like protein</fullName>
    </recommendedName>
</protein>
<name>PIWIL_DUGJA</name>
<accession>Q2PC95</accession>
<comment type="similarity">
    <text evidence="3">Belongs to the argonaute family. Piwi subfamily.</text>
</comment>